<sequence length="633" mass="71022">MGLCVNGAVPSEATKKDENLKRGNWGNQIEFVLTSVGYAVGLGNVWRFPYLCYRNGGGAFMFPYFIMLIFCGIPLFFMELSFGQFASQGCLGVWRVSPIFKGVGYGMMVVSTYIGIYYNVVICIAFYYFFASMNRVLPWTYCNNLWNTNNCAGVLSPNSSASFNLSSQQNLLNLTLGLNQTLKRTSPSEEYWRRHVLKISEDIGDFGEVQLPLLGCLGVSWLVVFLCLIRGVKSSGKVVYFTATFPYVVLTILFIRGITLEGAINGILYYLTPQWDKILHAMVWGDAASQIFYSLGCAWGGLITMASYNKFHNNCYRDSIIISITNCATSVYAGFVIFSILGFMATHLGVDVSEVADHGPGLAFVAYPEALTLLPISPLWSILFFFMLILLGLGTQFCLLETLVTAVVDEIGNDWIIRWKTLVTLGVAIIGFLLGIPLTTQAGIYWLLLMDNYAASFSLVIISCIMCIAVMYIYGHRKYFKDIEMMLGFPPPLFFQICWRFISPGIIFFILIFTVIQYRPIQYNDYLYPDWAITIGFLMALSSVICIPLYAIFKIWCSEGDTFLQRLKNAVKPSKDWGPALQEHRTGRYAQMSSTRSESNPEAQPLNPEKMKEDLSLTIQGSNGQAHTQDSKV</sequence>
<accession>A7Y2W8</accession>
<feature type="chain" id="PRO_0000341534" description="Sodium- and chloride-dependent glycine transporter 1">
    <location>
        <begin position="1"/>
        <end position="633"/>
    </location>
</feature>
<feature type="topological domain" description="Cytoplasmic" evidence="4">
    <location>
        <begin position="1"/>
        <end position="30"/>
    </location>
</feature>
<feature type="transmembrane region" description="Helical; Name=1" evidence="4">
    <location>
        <begin position="31"/>
        <end position="51"/>
    </location>
</feature>
<feature type="transmembrane region" description="Helical; Name=2" evidence="4">
    <location>
        <begin position="58"/>
        <end position="78"/>
    </location>
</feature>
<feature type="transmembrane region" description="Helical; Name=3" evidence="4">
    <location>
        <begin position="113"/>
        <end position="133"/>
    </location>
</feature>
<feature type="topological domain" description="Extracellular" evidence="4">
    <location>
        <begin position="134"/>
        <end position="208"/>
    </location>
</feature>
<feature type="transmembrane region" description="Helical; Name=4" evidence="4">
    <location>
        <begin position="209"/>
        <end position="229"/>
    </location>
</feature>
<feature type="transmembrane region" description="Helical; Name=5" evidence="4">
    <location>
        <begin position="238"/>
        <end position="258"/>
    </location>
</feature>
<feature type="transmembrane region" description="Helical; Name=6" evidence="4">
    <location>
        <begin position="283"/>
        <end position="303"/>
    </location>
</feature>
<feature type="transmembrane region" description="Helical; Name=7" evidence="4">
    <location>
        <begin position="330"/>
        <end position="350"/>
    </location>
</feature>
<feature type="transmembrane region" description="Helical; Name=8" evidence="4">
    <location>
        <begin position="373"/>
        <end position="393"/>
    </location>
</feature>
<feature type="transmembrane region" description="Helical; Name=9" evidence="4">
    <location>
        <begin position="429"/>
        <end position="449"/>
    </location>
</feature>
<feature type="transmembrane region" description="Helical; Name=10" evidence="4">
    <location>
        <begin position="453"/>
        <end position="473"/>
    </location>
</feature>
<feature type="transmembrane region" description="Helical; Name=11" evidence="4">
    <location>
        <begin position="493"/>
        <end position="513"/>
    </location>
</feature>
<feature type="transmembrane region" description="Helical; Name=12" evidence="4">
    <location>
        <begin position="533"/>
        <end position="553"/>
    </location>
</feature>
<feature type="topological domain" description="Cytoplasmic" evidence="4">
    <location>
        <begin position="554"/>
        <end position="633"/>
    </location>
</feature>
<feature type="region of interest" description="Disordered" evidence="5">
    <location>
        <begin position="588"/>
        <end position="633"/>
    </location>
</feature>
<feature type="compositionally biased region" description="Polar residues" evidence="5">
    <location>
        <begin position="591"/>
        <end position="602"/>
    </location>
</feature>
<feature type="compositionally biased region" description="Polar residues" evidence="5">
    <location>
        <begin position="617"/>
        <end position="633"/>
    </location>
</feature>
<feature type="glycosylation site" description="N-linked (GlcNAc...) asparagine" evidence="4">
    <location>
        <position position="158"/>
    </location>
</feature>
<feature type="glycosylation site" description="N-linked (GlcNAc...) asparagine" evidence="4">
    <location>
        <position position="164"/>
    </location>
</feature>
<feature type="glycosylation site" description="N-linked (GlcNAc...) asparagine" evidence="4">
    <location>
        <position position="173"/>
    </location>
</feature>
<feature type="glycosylation site" description="N-linked (GlcNAc...) asparagine" evidence="4">
    <location>
        <position position="179"/>
    </location>
</feature>
<name>SC6A9_XENLA</name>
<organism>
    <name type="scientific">Xenopus laevis</name>
    <name type="common">African clawed frog</name>
    <dbReference type="NCBI Taxonomy" id="8355"/>
    <lineage>
        <taxon>Eukaryota</taxon>
        <taxon>Metazoa</taxon>
        <taxon>Chordata</taxon>
        <taxon>Craniata</taxon>
        <taxon>Vertebrata</taxon>
        <taxon>Euteleostomi</taxon>
        <taxon>Amphibia</taxon>
        <taxon>Batrachia</taxon>
        <taxon>Anura</taxon>
        <taxon>Pipoidea</taxon>
        <taxon>Pipidae</taxon>
        <taxon>Xenopodinae</taxon>
        <taxon>Xenopus</taxon>
        <taxon>Xenopus</taxon>
    </lineage>
</organism>
<evidence type="ECO:0000250" key="1">
    <source>
        <dbReference type="UniProtKB" id="P28571"/>
    </source>
</evidence>
<evidence type="ECO:0000250" key="2">
    <source>
        <dbReference type="UniProtKB" id="P28572"/>
    </source>
</evidence>
<evidence type="ECO:0000250" key="3">
    <source>
        <dbReference type="UniProtKB" id="P48067"/>
    </source>
</evidence>
<evidence type="ECO:0000255" key="4"/>
<evidence type="ECO:0000256" key="5">
    <source>
        <dbReference type="SAM" id="MobiDB-lite"/>
    </source>
</evidence>
<evidence type="ECO:0000269" key="6">
    <source>
    </source>
</evidence>
<evidence type="ECO:0000305" key="7"/>
<evidence type="ECO:0000312" key="8">
    <source>
        <dbReference type="EMBL" id="ABV03172.1"/>
    </source>
</evidence>
<proteinExistence type="evidence at transcript level"/>
<comment type="function">
    <text evidence="1">Sodium- and chloride-dependent glycine transporter which is essential for regulating glycine concentrations at inhibitory glycinergic synapses.</text>
</comment>
<comment type="catalytic activity">
    <reaction evidence="1">
        <text>glycine(out) + chloride(out) + 2 Na(+)(out) = glycine(in) + chloride(in) + 2 Na(+)(in)</text>
        <dbReference type="Rhea" id="RHEA:70691"/>
        <dbReference type="ChEBI" id="CHEBI:17996"/>
        <dbReference type="ChEBI" id="CHEBI:29101"/>
        <dbReference type="ChEBI" id="CHEBI:57305"/>
    </reaction>
</comment>
<comment type="subcellular location">
    <subcellularLocation>
        <location evidence="2">Cell membrane</location>
        <topology evidence="4">Multi-pass membrane protein</topology>
    </subcellularLocation>
</comment>
<comment type="tissue specificity">
    <text evidence="6">First expressed in early tailbud stage embryos in the midbrain and anterior spinal cord, and weakly in the hindbrain. By late tailbud stages, expression extends posteriorly in the spinal cord to appear in between somites. Expressed in the forebrain, retina, between the somites and in the blood islands by the swimming tadpole stages.</text>
</comment>
<comment type="similarity">
    <text evidence="7">Belongs to the sodium:neurotransmitter symporter (SNF) (TC 2.A.22) family. SLC6A9 subfamily.</text>
</comment>
<gene>
    <name evidence="3" type="primary">slc6a9</name>
    <name evidence="8" type="synonym">glyt1</name>
</gene>
<reference evidence="7 8" key="1">
    <citation type="journal article" date="2008" name="Gene Expr. Patterns">
        <title>Expression patterns of glycine transporters (xGlyT1, xGlyT2, and xVIAAT) in Xenopus laevis during early development.</title>
        <authorList>
            <person name="Wester M.R."/>
            <person name="Teasley D.C."/>
            <person name="Byers S.L."/>
            <person name="Saha M.S."/>
        </authorList>
    </citation>
    <scope>NUCLEOTIDE SEQUENCE [MRNA]</scope>
    <scope>TISSUE SPECIFICITY</scope>
    <source>
        <tissue evidence="6">Tadpole</tissue>
    </source>
</reference>
<protein>
    <recommendedName>
        <fullName>Sodium- and chloride-dependent glycine transporter 1</fullName>
        <shortName>GlyT-1</shortName>
        <shortName>GlyT1</shortName>
        <shortName>xGlyT1</shortName>
    </recommendedName>
    <alternativeName>
        <fullName>Solute carrier family 6 member 9</fullName>
    </alternativeName>
</protein>
<keyword id="KW-0029">Amino-acid transport</keyword>
<keyword id="KW-1003">Cell membrane</keyword>
<keyword id="KW-0325">Glycoprotein</keyword>
<keyword id="KW-0472">Membrane</keyword>
<keyword id="KW-0532">Neurotransmitter transport</keyword>
<keyword id="KW-1185">Reference proteome</keyword>
<keyword id="KW-0769">Symport</keyword>
<keyword id="KW-0812">Transmembrane</keyword>
<keyword id="KW-1133">Transmembrane helix</keyword>
<keyword id="KW-0813">Transport</keyword>
<dbReference type="EMBL" id="EU117185">
    <property type="protein sequence ID" value="ABV03172.1"/>
    <property type="molecule type" value="mRNA"/>
</dbReference>
<dbReference type="RefSeq" id="NP_001104228.1">
    <property type="nucleotide sequence ID" value="NM_001110758.1"/>
</dbReference>
<dbReference type="SMR" id="A7Y2W8"/>
<dbReference type="GlyCosmos" id="A7Y2W8">
    <property type="glycosylation" value="4 sites, No reported glycans"/>
</dbReference>
<dbReference type="GeneID" id="108714278"/>
<dbReference type="AGR" id="Xenbase:XB-GENE-17338334"/>
<dbReference type="CTD" id="108714278"/>
<dbReference type="Xenbase" id="XB-GENE-17338334">
    <property type="gene designation" value="slc6a9.L"/>
</dbReference>
<dbReference type="OrthoDB" id="6581954at2759"/>
<dbReference type="Proteomes" id="UP000186698">
    <property type="component" value="Unplaced"/>
</dbReference>
<dbReference type="Bgee" id="108714278">
    <property type="expression patterns" value="Expressed in egg cell and 15 other cell types or tissues"/>
</dbReference>
<dbReference type="GO" id="GO:0005886">
    <property type="term" value="C:plasma membrane"/>
    <property type="evidence" value="ECO:0000250"/>
    <property type="project" value="UniProtKB"/>
</dbReference>
<dbReference type="GO" id="GO:0005283">
    <property type="term" value="F:amino acid:sodium symporter activity"/>
    <property type="evidence" value="ECO:0000318"/>
    <property type="project" value="GO_Central"/>
</dbReference>
<dbReference type="GO" id="GO:0015375">
    <property type="term" value="F:glycine:sodium symporter activity"/>
    <property type="evidence" value="ECO:0000250"/>
    <property type="project" value="UniProtKB"/>
</dbReference>
<dbReference type="GO" id="GO:1903804">
    <property type="term" value="P:glycine import across plasma membrane"/>
    <property type="evidence" value="ECO:0000318"/>
    <property type="project" value="GO_Central"/>
</dbReference>
<dbReference type="GO" id="GO:0006836">
    <property type="term" value="P:neurotransmitter transport"/>
    <property type="evidence" value="ECO:0007669"/>
    <property type="project" value="UniProtKB-KW"/>
</dbReference>
<dbReference type="GO" id="GO:0060092">
    <property type="term" value="P:regulation of synaptic transmission, glycinergic"/>
    <property type="evidence" value="ECO:0000250"/>
    <property type="project" value="UniProtKB"/>
</dbReference>
<dbReference type="GO" id="GO:0035725">
    <property type="term" value="P:sodium ion transmembrane transport"/>
    <property type="evidence" value="ECO:0000318"/>
    <property type="project" value="GO_Central"/>
</dbReference>
<dbReference type="CDD" id="cd11498">
    <property type="entry name" value="SLC6sbd_GlyT1"/>
    <property type="match status" value="1"/>
</dbReference>
<dbReference type="InterPro" id="IPR000175">
    <property type="entry name" value="Na/ntran_symport"/>
</dbReference>
<dbReference type="InterPro" id="IPR003028">
    <property type="entry name" value="Na/ntran_symport_glycine_GLY1"/>
</dbReference>
<dbReference type="InterPro" id="IPR037272">
    <property type="entry name" value="SNS_sf"/>
</dbReference>
<dbReference type="PANTHER" id="PTHR11616:SF263">
    <property type="entry name" value="SODIUM- AND CHLORIDE-DEPENDENT GLYCINE TRANSPORTER 1"/>
    <property type="match status" value="1"/>
</dbReference>
<dbReference type="PANTHER" id="PTHR11616">
    <property type="entry name" value="SODIUM/CHLORIDE DEPENDENT TRANSPORTER"/>
    <property type="match status" value="1"/>
</dbReference>
<dbReference type="Pfam" id="PF00209">
    <property type="entry name" value="SNF"/>
    <property type="match status" value="1"/>
</dbReference>
<dbReference type="PRINTS" id="PR01204">
    <property type="entry name" value="GLY1TRNSPORT"/>
</dbReference>
<dbReference type="PRINTS" id="PR00176">
    <property type="entry name" value="NANEUSMPORT"/>
</dbReference>
<dbReference type="SUPFAM" id="SSF161070">
    <property type="entry name" value="SNF-like"/>
    <property type="match status" value="1"/>
</dbReference>
<dbReference type="PROSITE" id="PS00610">
    <property type="entry name" value="NA_NEUROTRAN_SYMP_1"/>
    <property type="match status" value="1"/>
</dbReference>
<dbReference type="PROSITE" id="PS50267">
    <property type="entry name" value="NA_NEUROTRAN_SYMP_3"/>
    <property type="match status" value="1"/>
</dbReference>